<proteinExistence type="evidence at protein level"/>
<sequence length="1124" mass="125297">RTFVKKYSASRQFTGEGYLEYRTTSGNIIDSDKDELRVEFSTVQPSGLLFYARNSGGPFADYVALELVGGRLRFSIRYGRSSHSTENLHETLLGKNLNDAKSHSVEILHDKDVTTIYLDKTSDQEKAEHSFKTKYTKLDIDVAMYVGGAFDFKALLSVKSNALFMGCIFQAEFKKILPGPEKVIDFLKDDKVTTYPRTMNQKCVAQTYEPFTFSSDDSSFVCSVGGLSSANSLSGSFVFRTYKPSGVLLKQVDGGNGFELSYMEMDVQLKVIIRNSETLLNINYQNELTKINKGNWHYVTFNISQTSFELSVGSKRETRTPAVTLPSNFFKDGLTAGGFVGCMNELIINKQKCQPNAGSRIKNVEWSGCNITDFCIFSPCLHGGECTQTGKTFSCGCSGTGYDKGPNSLSVCQFSESESTCESLKKNNPSLSLSDRSYALDFDDSGPIRTYKAFCNFSADPPTTRVESRDFKIKLTPSKQPISQRISYEPSLDAAKALARRSEWCYQFVDFGCKKAKLHTGSNNEKLGFWVSSNGVYQSYWGGAKQGSRSCACGETNPNSCIDSSKKCNCDAGLDKWHNDEGYLNSTTLLPVVEVMFKGVTSGTEANFTVGHLYCAGEISNTATFVNEDGFIKLEKWSPPSNGVISLFFKTPYEKGVLLYNGMPEKDFFQVEIINETSVGLSYNIGNGVRKIELSLGDKQVNDRSWHHVMIYHNMKVFGFRLDNQEGKHENPLFLKRELNLNNELYVAGYPYDVSKGFVGCIRGLDVNGEVQDLSKLAGEAVFVKSGCGAACENNSCKNHAKCLDNYNVYFCDCSKTPYYGYFCHEENGASFKDPGSQLVYEYPSASDVFRFDIVVGFKLGEGKPCIGDIIRLGSSDKSQFYRLSLTNRKLQFDFKGPRGQGSITIDPPSVGDFCRDVHTFALSRRYKVVNYTIDGVKKPKEEIERLDGLFTSMKKVTIGKEGDGGFKGCITGVKVTREAVGQKPETVEPIKEYLYDDKNTDLVTSKHVSRATCGPEPKVPEIPTPRPVGQRADVSTPQGITTNPKLQAEDDDKTAIIVVVVLILVLLLVVLILVIYWYWARHKGEYHTHEDDEELKATDPYIEPAAPRKLKGEEPEKKKEWYI</sequence>
<name>ELP_ACRMI</name>
<dbReference type="EMBL" id="JR980881">
    <property type="status" value="NOT_ANNOTATED_CDS"/>
    <property type="molecule type" value="mRNA"/>
</dbReference>
<dbReference type="SMR" id="B8UU78"/>
<dbReference type="OrthoDB" id="26719at2759"/>
<dbReference type="GO" id="GO:0016020">
    <property type="term" value="C:membrane"/>
    <property type="evidence" value="ECO:0007669"/>
    <property type="project" value="UniProtKB-SubCell"/>
</dbReference>
<dbReference type="CDD" id="cd00110">
    <property type="entry name" value="LamG"/>
    <property type="match status" value="3"/>
</dbReference>
<dbReference type="Gene3D" id="2.60.120.1000">
    <property type="match status" value="1"/>
</dbReference>
<dbReference type="Gene3D" id="2.60.120.200">
    <property type="match status" value="4"/>
</dbReference>
<dbReference type="Gene3D" id="2.10.25.10">
    <property type="entry name" value="Laminin"/>
    <property type="match status" value="1"/>
</dbReference>
<dbReference type="InterPro" id="IPR013320">
    <property type="entry name" value="ConA-like_dom_sf"/>
</dbReference>
<dbReference type="InterPro" id="IPR000742">
    <property type="entry name" value="EGF-like_dom"/>
</dbReference>
<dbReference type="InterPro" id="IPR000152">
    <property type="entry name" value="EGF-type_Asp/Asn_hydroxyl_site"/>
</dbReference>
<dbReference type="InterPro" id="IPR001791">
    <property type="entry name" value="Laminin_G"/>
</dbReference>
<dbReference type="InterPro" id="IPR003585">
    <property type="entry name" value="Neurexin-like"/>
</dbReference>
<dbReference type="InterPro" id="IPR050372">
    <property type="entry name" value="Neurexin-related_CASP"/>
</dbReference>
<dbReference type="PANTHER" id="PTHR15036:SF49">
    <property type="entry name" value="AXOTACTIN"/>
    <property type="match status" value="1"/>
</dbReference>
<dbReference type="PANTHER" id="PTHR15036">
    <property type="entry name" value="PIKACHURIN-LIKE PROTEIN"/>
    <property type="match status" value="1"/>
</dbReference>
<dbReference type="Pfam" id="PF02210">
    <property type="entry name" value="Laminin_G_2"/>
    <property type="match status" value="3"/>
</dbReference>
<dbReference type="SMART" id="SM00294">
    <property type="entry name" value="4.1m"/>
    <property type="match status" value="1"/>
</dbReference>
<dbReference type="SMART" id="SM00181">
    <property type="entry name" value="EGF"/>
    <property type="match status" value="2"/>
</dbReference>
<dbReference type="SMART" id="SM00282">
    <property type="entry name" value="LamG"/>
    <property type="match status" value="4"/>
</dbReference>
<dbReference type="SUPFAM" id="SSF49899">
    <property type="entry name" value="Concanavalin A-like lectins/glucanases"/>
    <property type="match status" value="4"/>
</dbReference>
<dbReference type="PROSITE" id="PS00010">
    <property type="entry name" value="ASX_HYDROXYL"/>
    <property type="match status" value="1"/>
</dbReference>
<dbReference type="PROSITE" id="PS50026">
    <property type="entry name" value="EGF_3"/>
    <property type="match status" value="2"/>
</dbReference>
<dbReference type="PROSITE" id="PS50025">
    <property type="entry name" value="LAM_G_DOMAIN"/>
    <property type="match status" value="3"/>
</dbReference>
<accession>B8UU78</accession>
<keyword id="KW-0903">Direct protein sequencing</keyword>
<keyword id="KW-1015">Disulfide bond</keyword>
<keyword id="KW-0245">EGF-like domain</keyword>
<keyword id="KW-0472">Membrane</keyword>
<keyword id="KW-0677">Repeat</keyword>
<keyword id="KW-0812">Transmembrane</keyword>
<keyword id="KW-1133">Transmembrane helix</keyword>
<comment type="subcellular location">
    <subcellularLocation>
        <location evidence="1">Membrane</location>
        <topology evidence="1">Single-pass membrane protein</topology>
    </subcellularLocation>
    <text evidence="1 6">Presence in the organic matrix of the skeleton may be due to shedding of a soluble peptide.</text>
</comment>
<comment type="tissue specificity">
    <text evidence="5">Component of the acid-insoluble organic matrix of the aragonitic skeleton (at protein level).</text>
</comment>
<evidence type="ECO:0000255" key="1"/>
<evidence type="ECO:0000255" key="2">
    <source>
        <dbReference type="PROSITE-ProRule" id="PRU00076"/>
    </source>
</evidence>
<evidence type="ECO:0000255" key="3">
    <source>
        <dbReference type="PROSITE-ProRule" id="PRU00122"/>
    </source>
</evidence>
<evidence type="ECO:0000256" key="4">
    <source>
        <dbReference type="SAM" id="MobiDB-lite"/>
    </source>
</evidence>
<evidence type="ECO:0000269" key="5">
    <source>
    </source>
</evidence>
<evidence type="ECO:0000303" key="6">
    <source>
    </source>
</evidence>
<evidence type="ECO:0000305" key="7"/>
<reference evidence="7" key="1">
    <citation type="journal article" date="2012" name="Mol. Ecol.">
        <title>Whole transcriptome analysis of the coral Acropora millepora reveals complex responses to CO(2)-driven acidification during the initiation of calcification.</title>
        <authorList>
            <person name="Moya A."/>
            <person name="Huisman L."/>
            <person name="Ball E.E."/>
            <person name="Hayward D.C."/>
            <person name="Grasso L.C."/>
            <person name="Chua C.M."/>
            <person name="Woo H.N."/>
            <person name="Gattuso J.P."/>
            <person name="Foret S."/>
            <person name="Miller D.J."/>
        </authorList>
    </citation>
    <scope>NUCLEOTIDE SEQUENCE [MRNA]</scope>
</reference>
<reference evidence="7" key="2">
    <citation type="journal article" date="2013" name="Mol. Biol. Evol.">
        <title>The skeletal proteome of the coral Acropora millepora: the evolution of calcification by co-option and domain shuffling.</title>
        <authorList>
            <person name="Ramos-Silva P."/>
            <person name="Kaandorp J."/>
            <person name="Huisman L."/>
            <person name="Marie B."/>
            <person name="Zanella-Cleon I."/>
            <person name="Guichard N."/>
            <person name="Miller D.J."/>
            <person name="Marin F."/>
        </authorList>
    </citation>
    <scope>PROTEIN SEQUENCE OF 11-23; 37-72; 319-332; 426-450 AND 485-497</scope>
    <scope>TISSUE SPECIFICITY</scope>
    <scope>IDENTIFICATION BY MASS SPECTROMETRY</scope>
</reference>
<feature type="chain" id="PRO_0000429499" description="EGF and laminin G domain-containing protein">
    <location>
        <begin position="1" status="less than"/>
        <end position="1124" status="greater than"/>
    </location>
</feature>
<feature type="topological domain" description="Extracellular" evidence="1">
    <location>
        <begin position="1"/>
        <end position="1055"/>
    </location>
</feature>
<feature type="transmembrane region" description="Helical" evidence="1">
    <location>
        <begin position="1056"/>
        <end position="1076"/>
    </location>
</feature>
<feature type="topological domain" description="Cytoplasmic" evidence="1">
    <location>
        <begin position="1077"/>
        <end position="1124"/>
    </location>
</feature>
<feature type="domain" description="Laminin G-like 1" evidence="3">
    <location>
        <begin position="8"/>
        <end position="203"/>
    </location>
</feature>
<feature type="domain" description="Laminin G-like 2" evidence="3">
    <location>
        <begin position="210"/>
        <end position="369"/>
    </location>
</feature>
<feature type="domain" description="EGF-like 1" evidence="2">
    <location>
        <begin position="371"/>
        <end position="413"/>
    </location>
</feature>
<feature type="domain" description="Laminin G-like 3" evidence="3">
    <location>
        <begin position="621"/>
        <end position="788"/>
    </location>
</feature>
<feature type="domain" description="EGF-like 2" evidence="2">
    <location>
        <begin position="789"/>
        <end position="825"/>
    </location>
</feature>
<feature type="region of interest" description="Disordered" evidence="4">
    <location>
        <begin position="1011"/>
        <end position="1047"/>
    </location>
</feature>
<feature type="region of interest" description="Disordered" evidence="4">
    <location>
        <begin position="1090"/>
        <end position="1124"/>
    </location>
</feature>
<feature type="compositionally biased region" description="Polar residues" evidence="4">
    <location>
        <begin position="1034"/>
        <end position="1046"/>
    </location>
</feature>
<feature type="compositionally biased region" description="Basic and acidic residues" evidence="4">
    <location>
        <begin position="1111"/>
        <end position="1124"/>
    </location>
</feature>
<feature type="disulfide bond" evidence="1">
    <location>
        <begin position="167"/>
        <end position="203"/>
    </location>
</feature>
<feature type="disulfide bond" evidence="1">
    <location>
        <begin position="342"/>
        <end position="369"/>
    </location>
</feature>
<feature type="disulfide bond" evidence="1">
    <location>
        <begin position="375"/>
        <end position="386"/>
    </location>
</feature>
<feature type="disulfide bond" evidence="1">
    <location>
        <begin position="380"/>
        <end position="395"/>
    </location>
</feature>
<feature type="disulfide bond" evidence="1">
    <location>
        <begin position="397"/>
        <end position="412"/>
    </location>
</feature>
<feature type="disulfide bond" evidence="1">
    <location>
        <begin position="761"/>
        <end position="788"/>
    </location>
</feature>
<feature type="disulfide bond" evidence="1">
    <location>
        <begin position="792"/>
        <end position="803"/>
    </location>
</feature>
<feature type="disulfide bond" evidence="1">
    <location>
        <begin position="797"/>
        <end position="812"/>
    </location>
</feature>
<feature type="disulfide bond" evidence="1">
    <location>
        <begin position="814"/>
        <end position="824"/>
    </location>
</feature>
<feature type="non-terminal residue" evidence="7">
    <location>
        <position position="1"/>
    </location>
</feature>
<feature type="non-terminal residue" evidence="7">
    <location>
        <position position="1124"/>
    </location>
</feature>
<organism>
    <name type="scientific">Acropora millepora</name>
    <name type="common">Staghorn coral</name>
    <name type="synonym">Heteropora millepora</name>
    <dbReference type="NCBI Taxonomy" id="45264"/>
    <lineage>
        <taxon>Eukaryota</taxon>
        <taxon>Metazoa</taxon>
        <taxon>Cnidaria</taxon>
        <taxon>Anthozoa</taxon>
        <taxon>Hexacorallia</taxon>
        <taxon>Scleractinia</taxon>
        <taxon>Astrocoeniina</taxon>
        <taxon>Acroporidae</taxon>
        <taxon>Acropora</taxon>
    </lineage>
</organism>
<protein>
    <recommendedName>
        <fullName evidence="6">EGF and laminin G domain-containing protein</fullName>
    </recommendedName>
</protein>